<proteinExistence type="evidence at protein level"/>
<keyword id="KW-0002">3D-structure</keyword>
<keyword id="KW-0148">Chlorophyll</keyword>
<keyword id="KW-0157">Chromophore</keyword>
<keyword id="KW-0460">Magnesium</keyword>
<keyword id="KW-0472">Membrane</keyword>
<keyword id="KW-0479">Metal-binding</keyword>
<keyword id="KW-0602">Photosynthesis</keyword>
<keyword id="KW-0604">Photosystem II</keyword>
<keyword id="KW-0793">Thylakoid</keyword>
<keyword id="KW-0812">Transmembrane</keyword>
<keyword id="KW-1133">Transmembrane helix</keyword>
<name>PSBB_THEVL</name>
<comment type="function">
    <text evidence="1 3 5">One of the components of the core complex of photosystem II (PSII). It binds chlorophyll and helps catalyze the primary light-induced photochemical processes of PSII. PSII is a light-driven water:plastoquinone oxidoreductase, using light energy to abstract electrons from H(2)O, generating O(2) and a proton gradient subsequently used for ATP formation.</text>
</comment>
<comment type="cofactor">
    <text evidence="1 2 3 4 5">Binds multiple chlorophylls. PSII binds additional chlorophylls, carotenoids and specific lipids.</text>
</comment>
<comment type="subunit">
    <text evidence="1 2 3 4 5">PSII is composed of 1 copy each of membrane proteins PsbA, PsbB, PsbC, PsbD, PsbE, PsbF, PsbH, PsbI, PsbJ, PsbK, PsbL, PsbM, PsbT, PsbX, PsbY, PsbZ, Psb30/Ycf12, peripheral proteins PsbO, CyanoQ (PsbQ), PsbU, PsbV and a large number of cofactors. It forms dimeric complexes.</text>
</comment>
<comment type="subcellular location">
    <subcellularLocation>
        <location evidence="1 2 3 4 5">Cellular thylakoid membrane</location>
        <topology evidence="1 2 3 4 5">Multi-pass membrane protein</topology>
    </subcellularLocation>
</comment>
<comment type="similarity">
    <text evidence="1 6">Belongs to the PsbB/PsbC family. PsbB subfamily.</text>
</comment>
<feature type="chain" id="PRO_0000422600" description="Photosystem II CP47 reaction center protein">
    <location>
        <begin position="1"/>
        <end position="505"/>
    </location>
</feature>
<feature type="topological domain" description="Cytoplasmic" evidence="4">
    <location>
        <begin position="1"/>
        <end position="19"/>
    </location>
</feature>
<feature type="transmembrane region" description="Helical" evidence="1 4">
    <location>
        <begin position="20"/>
        <end position="35"/>
    </location>
</feature>
<feature type="topological domain" description="Lumenal" evidence="4">
    <location>
        <begin position="36"/>
        <end position="99"/>
    </location>
</feature>
<feature type="transmembrane region" description="Helical" evidence="1 4">
    <location>
        <begin position="100"/>
        <end position="114"/>
    </location>
</feature>
<feature type="topological domain" description="Cytoplasmic" evidence="4">
    <location>
        <begin position="115"/>
        <end position="138"/>
    </location>
</feature>
<feature type="transmembrane region" description="Helical" evidence="1 4">
    <location>
        <begin position="139"/>
        <end position="155"/>
    </location>
</feature>
<feature type="topological domain" description="Lumenal" evidence="4">
    <location>
        <begin position="156"/>
        <end position="201"/>
    </location>
</feature>
<feature type="transmembrane region" description="Helical" evidence="1 4">
    <location>
        <begin position="202"/>
        <end position="217"/>
    </location>
</feature>
<feature type="topological domain" description="Cytoplasmic" evidence="4">
    <location>
        <begin position="218"/>
        <end position="235"/>
    </location>
</feature>
<feature type="transmembrane region" description="Helical" evidence="1 4">
    <location>
        <begin position="236"/>
        <end position="251"/>
    </location>
</feature>
<feature type="topological domain" description="Lumenal" evidence="4">
    <location>
        <begin position="252"/>
        <end position="455"/>
    </location>
</feature>
<feature type="transmembrane region" description="Helical" evidence="1 4">
    <location>
        <begin position="456"/>
        <end position="471"/>
    </location>
</feature>
<feature type="topological domain" description="Cytoplasmic" evidence="4">
    <location>
        <begin position="472"/>
        <end position="505"/>
    </location>
</feature>
<feature type="binding site" description="axial binding residue" evidence="4">
    <location>
        <position position="8"/>
    </location>
    <ligand>
        <name>chlorophyll a</name>
        <dbReference type="ChEBI" id="CHEBI:58416"/>
        <label>2</label>
    </ligand>
    <ligandPart>
        <name>Mg</name>
        <dbReference type="ChEBI" id="CHEBI:25107"/>
    </ligandPart>
</feature>
<feature type="binding site" description="axial binding residue" evidence="4">
    <location>
        <position position="22"/>
    </location>
    <ligand>
        <name>chlorophyll a</name>
        <dbReference type="ChEBI" id="CHEBI:58416"/>
        <label>3</label>
    </ligand>
    <ligandPart>
        <name>Mg</name>
        <dbReference type="ChEBI" id="CHEBI:25107"/>
    </ligandPart>
</feature>
<feature type="binding site" description="axial binding residue" evidence="4">
    <location>
        <position position="25"/>
    </location>
    <ligand>
        <name>chlorophyll a</name>
        <dbReference type="ChEBI" id="CHEBI:58416"/>
        <label>4</label>
    </ligand>
    <ligandPart>
        <name>Mg</name>
        <dbReference type="ChEBI" id="CHEBI:25107"/>
    </ligandPart>
</feature>
<feature type="binding site" description="axial binding residue" evidence="4">
    <location>
        <position position="99"/>
    </location>
    <ligand>
        <name>chlorophyll a</name>
        <dbReference type="ChEBI" id="CHEBI:58416"/>
        <label>8</label>
    </ligand>
    <ligandPart>
        <name>Mg</name>
        <dbReference type="ChEBI" id="CHEBI:25107"/>
    </ligandPart>
</feature>
<feature type="binding site" description="axial binding residue" evidence="4">
    <location>
        <position position="113"/>
    </location>
    <ligand>
        <name>chlorophyll a</name>
        <dbReference type="ChEBI" id="CHEBI:58416"/>
        <label>11</label>
    </ligand>
    <ligandPart>
        <name>Mg</name>
        <dbReference type="ChEBI" id="CHEBI:25107"/>
    </ligandPart>
</feature>
<feature type="binding site" description="axial binding residue" evidence="4">
    <location>
        <position position="141"/>
    </location>
    <ligand>
        <name>chlorophyll a</name>
        <dbReference type="ChEBI" id="CHEBI:58416"/>
        <label>5</label>
    </ligand>
    <ligandPart>
        <name>Mg</name>
        <dbReference type="ChEBI" id="CHEBI:25107"/>
    </ligandPart>
</feature>
<feature type="binding site" description="axial binding residue" evidence="4">
    <location>
        <position position="156"/>
    </location>
    <ligand>
        <name>chlorophyll a</name>
        <dbReference type="ChEBI" id="CHEBI:58416"/>
        <label>10</label>
    </ligand>
    <ligandPart>
        <name>Mg</name>
        <dbReference type="ChEBI" id="CHEBI:25107"/>
    </ligandPart>
</feature>
<feature type="binding site" description="axial binding residue" evidence="4">
    <location>
        <position position="200"/>
    </location>
    <ligand>
        <name>chlorophyll a</name>
        <dbReference type="ChEBI" id="CHEBI:58416"/>
        <label>14</label>
    </ligand>
    <ligandPart>
        <name>Mg</name>
        <dbReference type="ChEBI" id="CHEBI:25107"/>
    </ligandPart>
</feature>
<feature type="binding site" description="axial binding residue" evidence="4">
    <location>
        <position position="201"/>
    </location>
    <ligand>
        <name>chlorophyll a</name>
        <dbReference type="ChEBI" id="CHEBI:58416"/>
        <label>9</label>
    </ligand>
    <ligandPart>
        <name>Mg</name>
        <dbReference type="ChEBI" id="CHEBI:25107"/>
    </ligandPart>
</feature>
<feature type="binding site" description="axial binding residue" evidence="4">
    <location>
        <position position="215"/>
    </location>
    <ligand>
        <name>chlorophyll a</name>
        <dbReference type="ChEBI" id="CHEBI:58416"/>
        <label>13</label>
    </ligand>
    <ligandPart>
        <name>Mg</name>
        <dbReference type="ChEBI" id="CHEBI:25107"/>
    </ligandPart>
</feature>
<feature type="binding site" description="axial binding residue" evidence="4">
    <location>
        <position position="454"/>
    </location>
    <ligand>
        <name>chlorophyll a</name>
        <dbReference type="ChEBI" id="CHEBI:58416"/>
        <label>7</label>
    </ligand>
    <ligandPart>
        <name>Mg</name>
        <dbReference type="ChEBI" id="CHEBI:25107"/>
    </ligandPart>
</feature>
<feature type="binding site" description="axial binding residue" evidence="4">
    <location>
        <position position="465"/>
    </location>
    <ligand>
        <name>chlorophyll a</name>
        <dbReference type="ChEBI" id="CHEBI:58416"/>
        <label>16</label>
    </ligand>
    <ligandPart>
        <name>Mg</name>
        <dbReference type="ChEBI" id="CHEBI:25107"/>
    </ligandPart>
</feature>
<feature type="binding site" description="axial binding residue" evidence="4">
    <location>
        <position position="468"/>
    </location>
    <ligand>
        <name>chlorophyll a</name>
        <dbReference type="ChEBI" id="CHEBI:58416"/>
        <label>1</label>
    </ligand>
    <ligandPart>
        <name>Mg</name>
        <dbReference type="ChEBI" id="CHEBI:25107"/>
    </ligandPart>
</feature>
<feature type="non-terminal residue">
    <location>
        <position position="1"/>
    </location>
</feature>
<feature type="non-terminal residue">
    <location>
        <position position="505"/>
    </location>
</feature>
<feature type="helix" evidence="8">
    <location>
        <begin position="4"/>
        <end position="11"/>
    </location>
</feature>
<feature type="helix" evidence="8">
    <location>
        <begin position="15"/>
        <end position="43"/>
    </location>
</feature>
<feature type="turn" evidence="8">
    <location>
        <begin position="49"/>
        <end position="51"/>
    </location>
</feature>
<feature type="helix" evidence="8">
    <location>
        <begin position="54"/>
        <end position="56"/>
    </location>
</feature>
<feature type="helix" evidence="8">
    <location>
        <begin position="62"/>
        <end position="67"/>
    </location>
</feature>
<feature type="strand" evidence="11">
    <location>
        <begin position="76"/>
        <end position="78"/>
    </location>
</feature>
<feature type="strand" evidence="9">
    <location>
        <begin position="79"/>
        <end position="81"/>
    </location>
</feature>
<feature type="helix" evidence="8">
    <location>
        <begin position="92"/>
        <end position="115"/>
    </location>
</feature>
<feature type="helix" evidence="8">
    <location>
        <begin position="120"/>
        <end position="122"/>
    </location>
</feature>
<feature type="turn" evidence="8">
    <location>
        <begin position="125"/>
        <end position="127"/>
    </location>
</feature>
<feature type="helix" evidence="8">
    <location>
        <begin position="134"/>
        <end position="154"/>
    </location>
</feature>
<feature type="turn" evidence="8">
    <location>
        <begin position="155"/>
        <end position="158"/>
    </location>
</feature>
<feature type="strand" evidence="9">
    <location>
        <begin position="159"/>
        <end position="162"/>
    </location>
</feature>
<feature type="strand" evidence="8">
    <location>
        <begin position="165"/>
        <end position="167"/>
    </location>
</feature>
<feature type="strand" evidence="8">
    <location>
        <begin position="172"/>
        <end position="174"/>
    </location>
</feature>
<feature type="strand" evidence="8">
    <location>
        <begin position="176"/>
        <end position="178"/>
    </location>
</feature>
<feature type="helix" evidence="8">
    <location>
        <begin position="186"/>
        <end position="189"/>
    </location>
</feature>
<feature type="helix" evidence="8">
    <location>
        <begin position="194"/>
        <end position="217"/>
    </location>
</feature>
<feature type="helix" evidence="8">
    <location>
        <begin position="222"/>
        <end position="227"/>
    </location>
</feature>
<feature type="turn" evidence="8">
    <location>
        <begin position="228"/>
        <end position="231"/>
    </location>
</feature>
<feature type="helix" evidence="8">
    <location>
        <begin position="233"/>
        <end position="257"/>
    </location>
</feature>
<feature type="strand" evidence="10">
    <location>
        <begin position="260"/>
        <end position="262"/>
    </location>
</feature>
<feature type="helix" evidence="8">
    <location>
        <begin position="264"/>
        <end position="267"/>
    </location>
</feature>
<feature type="helix" evidence="8">
    <location>
        <begin position="271"/>
        <end position="275"/>
    </location>
</feature>
<feature type="helix" evidence="8">
    <location>
        <begin position="278"/>
        <end position="292"/>
    </location>
</feature>
<feature type="helix" evidence="8">
    <location>
        <begin position="297"/>
        <end position="302"/>
    </location>
</feature>
<feature type="helix" evidence="8">
    <location>
        <begin position="306"/>
        <end position="311"/>
    </location>
</feature>
<feature type="helix" evidence="8">
    <location>
        <begin position="314"/>
        <end position="316"/>
    </location>
</feature>
<feature type="helix" evidence="7">
    <location>
        <begin position="318"/>
        <end position="320"/>
    </location>
</feature>
<feature type="helix" evidence="8">
    <location>
        <begin position="329"/>
        <end position="331"/>
    </location>
</feature>
<feature type="strand" evidence="8">
    <location>
        <begin position="335"/>
        <end position="346"/>
    </location>
</feature>
<feature type="strand" evidence="9">
    <location>
        <begin position="348"/>
        <end position="350"/>
    </location>
</feature>
<feature type="strand" evidence="8">
    <location>
        <begin position="352"/>
        <end position="355"/>
    </location>
</feature>
<feature type="strand" evidence="8">
    <location>
        <begin position="368"/>
        <end position="370"/>
    </location>
</feature>
<feature type="strand" evidence="8">
    <location>
        <begin position="376"/>
        <end position="379"/>
    </location>
</feature>
<feature type="helix" evidence="12">
    <location>
        <begin position="384"/>
        <end position="386"/>
    </location>
</feature>
<feature type="strand" evidence="8">
    <location>
        <begin position="388"/>
        <end position="390"/>
    </location>
</feature>
<feature type="helix" evidence="8">
    <location>
        <begin position="391"/>
        <end position="394"/>
    </location>
</feature>
<feature type="strand" evidence="8">
    <location>
        <begin position="397"/>
        <end position="403"/>
    </location>
</feature>
<feature type="turn" evidence="8">
    <location>
        <begin position="404"/>
        <end position="407"/>
    </location>
</feature>
<feature type="strand" evidence="10">
    <location>
        <begin position="408"/>
        <end position="410"/>
    </location>
</feature>
<feature type="helix" evidence="8">
    <location>
        <begin position="413"/>
        <end position="423"/>
    </location>
</feature>
<feature type="strand" evidence="8">
    <location>
        <begin position="426"/>
        <end position="432"/>
    </location>
</feature>
<feature type="turn" evidence="8">
    <location>
        <begin position="434"/>
        <end position="437"/>
    </location>
</feature>
<feature type="helix" evidence="8">
    <location>
        <begin position="446"/>
        <end position="473"/>
    </location>
</feature>
<feature type="helix" evidence="8">
    <location>
        <begin position="475"/>
        <end position="477"/>
    </location>
</feature>
<feature type="helix" evidence="8">
    <location>
        <begin position="487"/>
        <end position="489"/>
    </location>
</feature>
<feature type="strand" evidence="8">
    <location>
        <begin position="491"/>
        <end position="497"/>
    </location>
</feature>
<feature type="helix" evidence="8">
    <location>
        <begin position="501"/>
        <end position="503"/>
    </location>
</feature>
<protein>
    <recommendedName>
        <fullName evidence="1">Photosystem II CP47 reaction center protein</fullName>
    </recommendedName>
    <alternativeName>
        <fullName evidence="1">PSII 47 kDa protein</fullName>
    </alternativeName>
    <alternativeName>
        <fullName evidence="1">Protein CP-47</fullName>
    </alternativeName>
</protein>
<gene>
    <name evidence="1" type="primary">psbB</name>
</gene>
<reference key="1">
    <citation type="journal article" date="2003" name="Proc. Natl. Acad. Sci. U.S.A.">
        <title>Crystal structure of oxygen-evolving photosystem II from Thermosynechococcus vulcanus at 3.7-A resolution.</title>
        <authorList>
            <person name="Kamiya N."/>
            <person name="Shen J.-R."/>
        </authorList>
    </citation>
    <scope>X-RAY CRYSTALLOGRAPHY (3.70 ANGSTROMS) IN PHOTOSYSTEM II</scope>
    <scope>COFACTOR</scope>
    <scope>SUBUNIT</scope>
    <scope>SUBCELLULAR LOCATION</scope>
</reference>
<reference key="2">
    <citation type="journal article" date="2009" name="Proc. Natl. Acad. Sci. U.S.A.">
        <title>Location of chloride and its possible functions in oxygen-evolving photosystem II revealed by X-ray crystallography.</title>
        <authorList>
            <person name="Kawakami K."/>
            <person name="Umena Y."/>
            <person name="Kamiya N."/>
            <person name="Shen J.R."/>
        </authorList>
    </citation>
    <scope>X-RAY CRYSTALLOGRAPHY (3.70 ANGSTROMS) OF 1-488 IN COMPLEX WITH CHLOROPHYLL A IN PHOTOSYSTEM II</scope>
    <scope>FUNCTION</scope>
    <scope>COFACTOR</scope>
    <scope>SUBUNIT</scope>
    <scope>SUBCELLULAR LOCATION</scope>
</reference>
<reference key="3">
    <citation type="journal article" date="2011" name="Nature">
        <title>Crystal structure of oxygen-evolving photosystem II at a resolution of 1.9 A.</title>
        <authorList>
            <person name="Umena Y."/>
            <person name="Kawakami K."/>
            <person name="Shen J.R."/>
            <person name="Kamiya N."/>
        </authorList>
    </citation>
    <scope>X-RAY CRYSTALLOGRAPHY (1.90 ANGSTROMS) OF 1-488 IN COMPLEX WITH CHLOROPHYLL A IN PHOTOSYSTEM II</scope>
    <scope>COFACTOR</scope>
    <scope>SUBUNIT</scope>
    <scope>SUBCELLULAR LOCATION</scope>
    <scope>TOPOLOGY</scope>
</reference>
<reference key="4">
    <citation type="journal article" date="2013" name="Proc. Natl. Acad. Sci. U.S.A.">
        <title>Structure of Sr-substituted photosystem II at 2.1 A resolution and its implications in the mechanism of water oxidation.</title>
        <authorList>
            <person name="Koua F.H."/>
            <person name="Umena Y."/>
            <person name="Kawakami K."/>
            <person name="Shen J.R."/>
        </authorList>
    </citation>
    <scope>X-RAY CRYSTALLOGRAPHY (2.1 ANGSTROMS) IN PHOTOSYSTEM II</scope>
    <scope>FUNCTION</scope>
    <scope>COFACTOR</scope>
    <scope>SUBUNIT</scope>
    <scope>SUBCELLULAR LOCATION</scope>
</reference>
<organism>
    <name type="scientific">Thermostichus vulcanus</name>
    <name type="common">Synechococcus vulcanus</name>
    <dbReference type="NCBI Taxonomy" id="32053"/>
    <lineage>
        <taxon>Bacteria</taxon>
        <taxon>Bacillati</taxon>
        <taxon>Cyanobacteriota</taxon>
        <taxon>Cyanophyceae</taxon>
        <taxon>Thermostichales</taxon>
        <taxon>Thermostichaceae</taxon>
        <taxon>Thermostichus</taxon>
    </lineage>
</organism>
<accession>D0VWR1</accession>
<sequence length="505" mass="56017">GLPWYRVHTVLINDPGRLIAAHLMHTALVAGWAGSMALYELATFDPSDPVLNPMWRQGMFVLPFMARLGVTGSWSGWSITGETGIDPGFWSFEGVALAHIVLSGLLFLAACWHWVYWDLELFRDPRTGEPALDLPKMFGIHLFLAGLLCFGFGAFHLTGLFGPGMWVSDPYGLTGSVQPVAPEWGPDGFNPYNPGGVVAHHIAAGIVGIIAGLFHILVRPPQRLYKALRMGNIETVLSSSIAAVFFAAFVVAGTMWYGSATTPIELFGPTRYQWDSSYFQQEINRRVQASLASGATLEEAWSAIPEKLAFYDYIGNNPAKGGLFRTGPMNKGDGIAQAWKGHAVFRNKEGEELFVRRMPAFFESFPVILTDKNGVVKADIPFRRAESKYSFEQQGVTVSFYGGELNGQTFTDPPTVKSYARKAIFGEIFEFDTETLNSDGIFRTSPRGWFTFAHAVFALLFFFGHIWHGARTLFRDVFSGIDPELSPEQVEWGFYQKVGDVTTRK</sequence>
<evidence type="ECO:0000255" key="1">
    <source>
        <dbReference type="HAMAP-Rule" id="MF_01495"/>
    </source>
</evidence>
<evidence type="ECO:0000269" key="2">
    <source>
    </source>
</evidence>
<evidence type="ECO:0000269" key="3">
    <source>
    </source>
</evidence>
<evidence type="ECO:0000269" key="4">
    <source>
    </source>
</evidence>
<evidence type="ECO:0000269" key="5">
    <source>
    </source>
</evidence>
<evidence type="ECO:0000305" key="6"/>
<evidence type="ECO:0007829" key="7">
    <source>
        <dbReference type="PDB" id="4UB6"/>
    </source>
</evidence>
<evidence type="ECO:0007829" key="8">
    <source>
        <dbReference type="PDB" id="5B66"/>
    </source>
</evidence>
<evidence type="ECO:0007829" key="9">
    <source>
        <dbReference type="PDB" id="7DXA"/>
    </source>
</evidence>
<evidence type="ECO:0007829" key="10">
    <source>
        <dbReference type="PDB" id="7EDA"/>
    </source>
</evidence>
<evidence type="ECO:0007829" key="11">
    <source>
        <dbReference type="PDB" id="8GN0"/>
    </source>
</evidence>
<evidence type="ECO:0007829" key="12">
    <source>
        <dbReference type="PDB" id="8IRH"/>
    </source>
</evidence>
<dbReference type="PDB" id="1IZL">
    <property type="method" value="X-ray"/>
    <property type="resolution" value="3.70 A"/>
    <property type="chains" value="B/L=1-505"/>
</dbReference>
<dbReference type="PDB" id="3A0B">
    <property type="method" value="X-ray"/>
    <property type="resolution" value="3.70 A"/>
    <property type="chains" value="B/b=1-488"/>
</dbReference>
<dbReference type="PDB" id="3A0H">
    <property type="method" value="X-ray"/>
    <property type="resolution" value="4.00 A"/>
    <property type="chains" value="B/b=1-488"/>
</dbReference>
<dbReference type="PDB" id="3WU2">
    <property type="method" value="X-ray"/>
    <property type="resolution" value="1.90 A"/>
    <property type="chains" value="B/b=1-504"/>
</dbReference>
<dbReference type="PDB" id="4IL6">
    <property type="method" value="X-ray"/>
    <property type="resolution" value="2.10 A"/>
    <property type="chains" value="B/b=1-505"/>
</dbReference>
<dbReference type="PDB" id="4UB6">
    <property type="method" value="X-ray"/>
    <property type="resolution" value="1.95 A"/>
    <property type="chains" value="B/b=1-505"/>
</dbReference>
<dbReference type="PDB" id="4UB8">
    <property type="method" value="X-ray"/>
    <property type="resolution" value="1.95 A"/>
    <property type="chains" value="B/b=1-505"/>
</dbReference>
<dbReference type="PDB" id="5B5E">
    <property type="method" value="X-ray"/>
    <property type="resolution" value="1.87 A"/>
    <property type="chains" value="B/b=1-505"/>
</dbReference>
<dbReference type="PDB" id="5B66">
    <property type="method" value="X-ray"/>
    <property type="resolution" value="1.85 A"/>
    <property type="chains" value="B/b=1-505"/>
</dbReference>
<dbReference type="PDB" id="5GTH">
    <property type="method" value="X-ray"/>
    <property type="resolution" value="2.50 A"/>
    <property type="chains" value="B/b=1-505"/>
</dbReference>
<dbReference type="PDB" id="5GTI">
    <property type="method" value="X-ray"/>
    <property type="resolution" value="2.50 A"/>
    <property type="chains" value="B/b=1-505"/>
</dbReference>
<dbReference type="PDB" id="5V2C">
    <property type="method" value="X-ray"/>
    <property type="resolution" value="1.90 A"/>
    <property type="chains" value="B/b=1-504"/>
</dbReference>
<dbReference type="PDB" id="5WS5">
    <property type="method" value="X-ray"/>
    <property type="resolution" value="2.35 A"/>
    <property type="chains" value="B/b=1-505"/>
</dbReference>
<dbReference type="PDB" id="5WS6">
    <property type="method" value="X-ray"/>
    <property type="resolution" value="2.35 A"/>
    <property type="chains" value="B/b=1-505"/>
</dbReference>
<dbReference type="PDB" id="6JLJ">
    <property type="method" value="X-ray"/>
    <property type="resolution" value="2.15 A"/>
    <property type="chains" value="B/b=1-505"/>
</dbReference>
<dbReference type="PDB" id="6JLK">
    <property type="method" value="X-ray"/>
    <property type="resolution" value="2.15 A"/>
    <property type="chains" value="B/b=1-505"/>
</dbReference>
<dbReference type="PDB" id="6JLL">
    <property type="method" value="X-ray"/>
    <property type="resolution" value="2.15 A"/>
    <property type="chains" value="B/b=1-505"/>
</dbReference>
<dbReference type="PDB" id="6JLM">
    <property type="method" value="X-ray"/>
    <property type="resolution" value="2.35 A"/>
    <property type="chains" value="B/b=1-505"/>
</dbReference>
<dbReference type="PDB" id="6JLN">
    <property type="method" value="X-ray"/>
    <property type="resolution" value="2.40 A"/>
    <property type="chains" value="B/b=1-505"/>
</dbReference>
<dbReference type="PDB" id="6JLO">
    <property type="method" value="X-ray"/>
    <property type="resolution" value="2.40 A"/>
    <property type="chains" value="B/b=1-505"/>
</dbReference>
<dbReference type="PDB" id="6JLP">
    <property type="method" value="X-ray"/>
    <property type="resolution" value="2.50 A"/>
    <property type="chains" value="B/b=1-505"/>
</dbReference>
<dbReference type="PDB" id="7CJI">
    <property type="method" value="X-ray"/>
    <property type="resolution" value="2.35 A"/>
    <property type="chains" value="B/b=1-505"/>
</dbReference>
<dbReference type="PDB" id="7CJJ">
    <property type="method" value="X-ray"/>
    <property type="resolution" value="2.40 A"/>
    <property type="chains" value="B/b=1-505"/>
</dbReference>
<dbReference type="PDB" id="7COU">
    <property type="method" value="X-ray"/>
    <property type="resolution" value="2.25 A"/>
    <property type="chains" value="B/b=1-505"/>
</dbReference>
<dbReference type="PDB" id="7CZL">
    <property type="method" value="EM"/>
    <property type="resolution" value="3.78 A"/>
    <property type="chains" value="B/b=1-505"/>
</dbReference>
<dbReference type="PDB" id="7D1T">
    <property type="method" value="EM"/>
    <property type="resolution" value="1.95 A"/>
    <property type="chains" value="B/b=1-505"/>
</dbReference>
<dbReference type="PDB" id="7D1U">
    <property type="method" value="EM"/>
    <property type="resolution" value="2.08 A"/>
    <property type="chains" value="B/b=1-505"/>
</dbReference>
<dbReference type="PDB" id="7DXA">
    <property type="method" value="EM"/>
    <property type="resolution" value="3.14 A"/>
    <property type="chains" value="b=1-505"/>
</dbReference>
<dbReference type="PDB" id="7DXH">
    <property type="method" value="EM"/>
    <property type="resolution" value="3.14 A"/>
    <property type="chains" value="b=1-505"/>
</dbReference>
<dbReference type="PDB" id="7EDA">
    <property type="method" value="EM"/>
    <property type="resolution" value="2.78 A"/>
    <property type="chains" value="B=1-504"/>
</dbReference>
<dbReference type="PDB" id="8GN0">
    <property type="method" value="X-ray"/>
    <property type="resolution" value="2.15 A"/>
    <property type="chains" value="B/b=1-505"/>
</dbReference>
<dbReference type="PDB" id="8GN1">
    <property type="method" value="X-ray"/>
    <property type="resolution" value="2.10 A"/>
    <property type="chains" value="B/b=1-505"/>
</dbReference>
<dbReference type="PDB" id="8GN2">
    <property type="method" value="X-ray"/>
    <property type="resolution" value="1.95 A"/>
    <property type="chains" value="B/b=1-505"/>
</dbReference>
<dbReference type="PDB" id="8IR5">
    <property type="method" value="X-ray"/>
    <property type="resolution" value="2.15 A"/>
    <property type="chains" value="B/b=1-505"/>
</dbReference>
<dbReference type="PDB" id="8IR6">
    <property type="method" value="X-ray"/>
    <property type="resolution" value="2.20 A"/>
    <property type="chains" value="B/b=1-505"/>
</dbReference>
<dbReference type="PDB" id="8IR7">
    <property type="method" value="X-ray"/>
    <property type="resolution" value="2.25 A"/>
    <property type="chains" value="B/b=1-505"/>
</dbReference>
<dbReference type="PDB" id="8IR8">
    <property type="method" value="X-ray"/>
    <property type="resolution" value="2.25 A"/>
    <property type="chains" value="B/b=1-505"/>
</dbReference>
<dbReference type="PDB" id="8IR9">
    <property type="method" value="X-ray"/>
    <property type="resolution" value="2.20 A"/>
    <property type="chains" value="B/b=1-505"/>
</dbReference>
<dbReference type="PDB" id="8IRA">
    <property type="method" value="X-ray"/>
    <property type="resolution" value="2.20 A"/>
    <property type="chains" value="B/b=1-505"/>
</dbReference>
<dbReference type="PDB" id="8IRB">
    <property type="method" value="X-ray"/>
    <property type="resolution" value="2.30 A"/>
    <property type="chains" value="B/b=1-505"/>
</dbReference>
<dbReference type="PDB" id="8IRC">
    <property type="method" value="X-ray"/>
    <property type="resolution" value="2.25 A"/>
    <property type="chains" value="B/b=1-505"/>
</dbReference>
<dbReference type="PDB" id="8IRD">
    <property type="method" value="X-ray"/>
    <property type="resolution" value="2.30 A"/>
    <property type="chains" value="B/b=1-505"/>
</dbReference>
<dbReference type="PDB" id="8IRE">
    <property type="method" value="X-ray"/>
    <property type="resolution" value="2.25 A"/>
    <property type="chains" value="B/b=1-505"/>
</dbReference>
<dbReference type="PDB" id="8IRF">
    <property type="method" value="X-ray"/>
    <property type="resolution" value="2.25 A"/>
    <property type="chains" value="B/b=1-505"/>
</dbReference>
<dbReference type="PDB" id="8IRG">
    <property type="method" value="X-ray"/>
    <property type="resolution" value="2.30 A"/>
    <property type="chains" value="B/b=1-505"/>
</dbReference>
<dbReference type="PDB" id="8IRH">
    <property type="method" value="X-ray"/>
    <property type="resolution" value="2.25 A"/>
    <property type="chains" value="B/b=1-505"/>
</dbReference>
<dbReference type="PDB" id="8IRI">
    <property type="method" value="X-ray"/>
    <property type="resolution" value="2.25 A"/>
    <property type="chains" value="B/b=1-505"/>
</dbReference>
<dbReference type="PDBsum" id="1IZL"/>
<dbReference type="PDBsum" id="3A0B"/>
<dbReference type="PDBsum" id="3A0H"/>
<dbReference type="PDBsum" id="3WU2"/>
<dbReference type="PDBsum" id="4IL6"/>
<dbReference type="PDBsum" id="4UB6"/>
<dbReference type="PDBsum" id="4UB8"/>
<dbReference type="PDBsum" id="5B5E"/>
<dbReference type="PDBsum" id="5B66"/>
<dbReference type="PDBsum" id="5GTH"/>
<dbReference type="PDBsum" id="5GTI"/>
<dbReference type="PDBsum" id="5V2C"/>
<dbReference type="PDBsum" id="5WS5"/>
<dbReference type="PDBsum" id="5WS6"/>
<dbReference type="PDBsum" id="6JLJ"/>
<dbReference type="PDBsum" id="6JLK"/>
<dbReference type="PDBsum" id="6JLL"/>
<dbReference type="PDBsum" id="6JLM"/>
<dbReference type="PDBsum" id="6JLN"/>
<dbReference type="PDBsum" id="6JLO"/>
<dbReference type="PDBsum" id="6JLP"/>
<dbReference type="PDBsum" id="7CJI"/>
<dbReference type="PDBsum" id="7CJJ"/>
<dbReference type="PDBsum" id="7COU"/>
<dbReference type="PDBsum" id="7CZL"/>
<dbReference type="PDBsum" id="7D1T"/>
<dbReference type="PDBsum" id="7D1U"/>
<dbReference type="PDBsum" id="7DXA"/>
<dbReference type="PDBsum" id="7DXH"/>
<dbReference type="PDBsum" id="7EDA"/>
<dbReference type="PDBsum" id="8GN0"/>
<dbReference type="PDBsum" id="8GN1"/>
<dbReference type="PDBsum" id="8GN2"/>
<dbReference type="PDBsum" id="8IR5"/>
<dbReference type="PDBsum" id="8IR6"/>
<dbReference type="PDBsum" id="8IR7"/>
<dbReference type="PDBsum" id="8IR8"/>
<dbReference type="PDBsum" id="8IR9"/>
<dbReference type="PDBsum" id="8IRA"/>
<dbReference type="PDBsum" id="8IRB"/>
<dbReference type="PDBsum" id="8IRC"/>
<dbReference type="PDBsum" id="8IRD"/>
<dbReference type="PDBsum" id="8IRE"/>
<dbReference type="PDBsum" id="8IRF"/>
<dbReference type="PDBsum" id="8IRG"/>
<dbReference type="PDBsum" id="8IRH"/>
<dbReference type="PDBsum" id="8IRI"/>
<dbReference type="EMDB" id="EMD-30511"/>
<dbReference type="EMDB" id="EMD-30547"/>
<dbReference type="EMDB" id="EMD-30548"/>
<dbReference type="EMDB" id="EMD-30902"/>
<dbReference type="EMDB" id="EMD-30909"/>
<dbReference type="EMDB" id="EMD-31062"/>
<dbReference type="SMR" id="D0VWR1"/>
<dbReference type="DIP" id="DIP-61464N"/>
<dbReference type="IntAct" id="D0VWR1">
    <property type="interactions" value="1"/>
</dbReference>
<dbReference type="EvolutionaryTrace" id="D0VWR1"/>
<dbReference type="GO" id="GO:0009523">
    <property type="term" value="C:photosystem II"/>
    <property type="evidence" value="ECO:0007669"/>
    <property type="project" value="UniProtKB-KW"/>
</dbReference>
<dbReference type="GO" id="GO:0031676">
    <property type="term" value="C:plasma membrane-derived thylakoid membrane"/>
    <property type="evidence" value="ECO:0007669"/>
    <property type="project" value="UniProtKB-SubCell"/>
</dbReference>
<dbReference type="GO" id="GO:0016168">
    <property type="term" value="F:chlorophyll binding"/>
    <property type="evidence" value="ECO:0007669"/>
    <property type="project" value="UniProtKB-KW"/>
</dbReference>
<dbReference type="GO" id="GO:0045156">
    <property type="term" value="F:electron transporter, transferring electrons within the cyclic electron transport pathway of photosynthesis activity"/>
    <property type="evidence" value="ECO:0007669"/>
    <property type="project" value="InterPro"/>
</dbReference>
<dbReference type="GO" id="GO:0046872">
    <property type="term" value="F:metal ion binding"/>
    <property type="evidence" value="ECO:0007669"/>
    <property type="project" value="UniProtKB-KW"/>
</dbReference>
<dbReference type="GO" id="GO:0009772">
    <property type="term" value="P:photosynthetic electron transport in photosystem II"/>
    <property type="evidence" value="ECO:0007669"/>
    <property type="project" value="InterPro"/>
</dbReference>
<dbReference type="Gene3D" id="3.10.680.10">
    <property type="entry name" value="Photosystem II CP47 reaction center protein"/>
    <property type="match status" value="1"/>
</dbReference>
<dbReference type="HAMAP" id="MF_01495">
    <property type="entry name" value="PSII_PsbB_CP47"/>
    <property type="match status" value="1"/>
</dbReference>
<dbReference type="InterPro" id="IPR000932">
    <property type="entry name" value="PS_antenna-like"/>
</dbReference>
<dbReference type="InterPro" id="IPR036001">
    <property type="entry name" value="PS_II_antenna-like_sf"/>
</dbReference>
<dbReference type="InterPro" id="IPR017486">
    <property type="entry name" value="PSII_PsbB"/>
</dbReference>
<dbReference type="NCBIfam" id="TIGR03039">
    <property type="entry name" value="PS_II_CP47"/>
    <property type="match status" value="1"/>
</dbReference>
<dbReference type="Pfam" id="PF00421">
    <property type="entry name" value="PSII"/>
    <property type="match status" value="1"/>
</dbReference>
<dbReference type="SUPFAM" id="SSF161077">
    <property type="entry name" value="Photosystem II antenna protein-like"/>
    <property type="match status" value="1"/>
</dbReference>